<dbReference type="EMBL" id="L24499">
    <property type="protein sequence ID" value="AAA29146.1"/>
    <property type="molecule type" value="Genomic_DNA"/>
</dbReference>
<dbReference type="SMR" id="P53021"/>
<dbReference type="Proteomes" id="UP000887572">
    <property type="component" value="Unplaced"/>
</dbReference>
<dbReference type="GO" id="GO:0005737">
    <property type="term" value="C:cytoplasm"/>
    <property type="evidence" value="ECO:0007669"/>
    <property type="project" value="UniProtKB-KW"/>
</dbReference>
<dbReference type="GO" id="GO:0005856">
    <property type="term" value="C:cytoskeleton"/>
    <property type="evidence" value="ECO:0007669"/>
    <property type="project" value="UniProtKB-SubCell"/>
</dbReference>
<dbReference type="GO" id="GO:0031143">
    <property type="term" value="C:pseudopodium"/>
    <property type="evidence" value="ECO:0007669"/>
    <property type="project" value="UniProtKB-SubCell"/>
</dbReference>
<dbReference type="Gene3D" id="2.60.40.10">
    <property type="entry name" value="Immunoglobulins"/>
    <property type="match status" value="1"/>
</dbReference>
<dbReference type="InterPro" id="IPR013783">
    <property type="entry name" value="Ig-like_fold"/>
</dbReference>
<dbReference type="InterPro" id="IPR000535">
    <property type="entry name" value="MSP_dom"/>
</dbReference>
<dbReference type="InterPro" id="IPR051155">
    <property type="entry name" value="Nematode_MSP"/>
</dbReference>
<dbReference type="InterPro" id="IPR008962">
    <property type="entry name" value="PapD-like_sf"/>
</dbReference>
<dbReference type="PANTHER" id="PTHR22920">
    <property type="entry name" value="MAJOR SPERM PROTEIN"/>
    <property type="match status" value="1"/>
</dbReference>
<dbReference type="PANTHER" id="PTHR22920:SF7">
    <property type="entry name" value="MSP DOMAIN-CONTAINING PROTEIN-RELATED"/>
    <property type="match status" value="1"/>
</dbReference>
<dbReference type="Pfam" id="PF00635">
    <property type="entry name" value="Motile_Sperm"/>
    <property type="match status" value="1"/>
</dbReference>
<dbReference type="SUPFAM" id="SSF49354">
    <property type="entry name" value="PapD-like"/>
    <property type="match status" value="1"/>
</dbReference>
<dbReference type="PROSITE" id="PS50202">
    <property type="entry name" value="MSP"/>
    <property type="match status" value="1"/>
</dbReference>
<protein>
    <recommendedName>
        <fullName>Major sperm protein 1</fullName>
    </recommendedName>
</protein>
<gene>
    <name type="primary">MSP-1</name>
</gene>
<name>MSP1_GLORO</name>
<sequence length="126" mass="13989">MAQLPPEDIATMPAQKVVFNAPFDNKATYYVRIINPGTKRIGFAFKTTKPKRINMNPPNGVLGPKESVNVAISCDAFDPSSEDTKGDRVTVEWCNTPDPAAAAFKLEWFQGDGMVRRKNLPIEYNV</sequence>
<evidence type="ECO:0000250" key="1"/>
<evidence type="ECO:0000255" key="2">
    <source>
        <dbReference type="PROSITE-ProRule" id="PRU00132"/>
    </source>
</evidence>
<reference key="1">
    <citation type="submission" date="1993-11" db="EMBL/GenBank/DDBJ databases">
        <authorList>
            <person name="Novitski C.E."/>
            <person name="Brown S."/>
            <person name="Chen R."/>
            <person name="Corner A.S."/>
            <person name="Atkinson H.J."/>
            <person name="McPherson M.J."/>
        </authorList>
    </citation>
    <scope>NUCLEOTIDE SEQUENCE [GENOMIC DNA]</scope>
    <source>
        <strain>Ro1 / Mierenbos</strain>
    </source>
</reference>
<keyword id="KW-0007">Acetylation</keyword>
<keyword id="KW-0966">Cell projection</keyword>
<keyword id="KW-0963">Cytoplasm</keyword>
<keyword id="KW-0206">Cytoskeleton</keyword>
<keyword id="KW-1185">Reference proteome</keyword>
<accession>P53021</accession>
<feature type="initiator methionine" description="Removed" evidence="1">
    <location>
        <position position="1"/>
    </location>
</feature>
<feature type="chain" id="PRO_0000213454" description="Major sperm protein 1">
    <location>
        <begin position="2"/>
        <end position="126"/>
    </location>
</feature>
<feature type="domain" description="MSP" evidence="2">
    <location>
        <begin position="8"/>
        <end position="125"/>
    </location>
</feature>
<feature type="modified residue" description="N-acetylalanine" evidence="1">
    <location>
        <position position="2"/>
    </location>
</feature>
<comment type="function">
    <text evidence="1">Central component in molecular interactions underlying sperm crawling. Forms an extensive filament system that extends from sperm villipoda, along the leading edge of the pseudopod (By similarity).</text>
</comment>
<comment type="subcellular location">
    <subcellularLocation>
        <location evidence="1">Cell projection</location>
        <location evidence="1">Pseudopodium</location>
    </subcellularLocation>
    <subcellularLocation>
        <location evidence="1">Cytoplasm</location>
        <location evidence="1">Cytoskeleton</location>
    </subcellularLocation>
</comment>
<comment type="tissue specificity">
    <text>Sperm.</text>
</comment>
<proteinExistence type="evidence at transcript level"/>
<organism>
    <name type="scientific">Globodera rostochiensis</name>
    <name type="common">Golden nematode worm</name>
    <name type="synonym">Heterodera rostochiensis</name>
    <dbReference type="NCBI Taxonomy" id="31243"/>
    <lineage>
        <taxon>Eukaryota</taxon>
        <taxon>Metazoa</taxon>
        <taxon>Ecdysozoa</taxon>
        <taxon>Nematoda</taxon>
        <taxon>Chromadorea</taxon>
        <taxon>Rhabditida</taxon>
        <taxon>Tylenchina</taxon>
        <taxon>Tylenchomorpha</taxon>
        <taxon>Tylenchoidea</taxon>
        <taxon>Heteroderidae</taxon>
        <taxon>Heteroderinae</taxon>
        <taxon>Globodera</taxon>
    </lineage>
</organism>